<organism>
    <name type="scientific">Finegoldia magna (strain ATCC 29328 / DSM 20472 / WAL 2508)</name>
    <name type="common">Peptostreptococcus magnus</name>
    <dbReference type="NCBI Taxonomy" id="334413"/>
    <lineage>
        <taxon>Bacteria</taxon>
        <taxon>Bacillati</taxon>
        <taxon>Bacillota</taxon>
        <taxon>Tissierellia</taxon>
        <taxon>Tissierellales</taxon>
        <taxon>Peptoniphilaceae</taxon>
        <taxon>Finegoldia</taxon>
    </lineage>
</organism>
<protein>
    <recommendedName>
        <fullName evidence="1">Deoxyuridine 5'-triphosphate nucleotidohydrolase</fullName>
        <shortName evidence="1">dUTPase</shortName>
        <ecNumber evidence="1">3.6.1.23</ecNumber>
    </recommendedName>
    <alternativeName>
        <fullName evidence="1">dUTP pyrophosphatase</fullName>
    </alternativeName>
</protein>
<proteinExistence type="inferred from homology"/>
<dbReference type="EC" id="3.6.1.23" evidence="1"/>
<dbReference type="EMBL" id="AP008971">
    <property type="protein sequence ID" value="BAG08178.1"/>
    <property type="molecule type" value="Genomic_DNA"/>
</dbReference>
<dbReference type="RefSeq" id="WP_012290611.1">
    <property type="nucleotide sequence ID" value="NC_010376.1"/>
</dbReference>
<dbReference type="SMR" id="B0S1D8"/>
<dbReference type="STRING" id="334413.FMG_0760"/>
<dbReference type="KEGG" id="fma:FMG_0760"/>
<dbReference type="eggNOG" id="COG0756">
    <property type="taxonomic scope" value="Bacteria"/>
</dbReference>
<dbReference type="HOGENOM" id="CLU_068508_1_2_9"/>
<dbReference type="UniPathway" id="UPA00610">
    <property type="reaction ID" value="UER00666"/>
</dbReference>
<dbReference type="Proteomes" id="UP000001319">
    <property type="component" value="Chromosome"/>
</dbReference>
<dbReference type="GO" id="GO:0004170">
    <property type="term" value="F:dUTP diphosphatase activity"/>
    <property type="evidence" value="ECO:0007669"/>
    <property type="project" value="UniProtKB-UniRule"/>
</dbReference>
<dbReference type="GO" id="GO:0000287">
    <property type="term" value="F:magnesium ion binding"/>
    <property type="evidence" value="ECO:0007669"/>
    <property type="project" value="UniProtKB-UniRule"/>
</dbReference>
<dbReference type="GO" id="GO:0006226">
    <property type="term" value="P:dUMP biosynthetic process"/>
    <property type="evidence" value="ECO:0007669"/>
    <property type="project" value="UniProtKB-UniRule"/>
</dbReference>
<dbReference type="GO" id="GO:0046081">
    <property type="term" value="P:dUTP catabolic process"/>
    <property type="evidence" value="ECO:0007669"/>
    <property type="project" value="InterPro"/>
</dbReference>
<dbReference type="CDD" id="cd07557">
    <property type="entry name" value="trimeric_dUTPase"/>
    <property type="match status" value="1"/>
</dbReference>
<dbReference type="FunFam" id="2.70.40.10:FF:000002">
    <property type="entry name" value="dUTP diphosphatase"/>
    <property type="match status" value="1"/>
</dbReference>
<dbReference type="Gene3D" id="2.70.40.10">
    <property type="match status" value="1"/>
</dbReference>
<dbReference type="HAMAP" id="MF_00116">
    <property type="entry name" value="dUTPase_bact"/>
    <property type="match status" value="1"/>
</dbReference>
<dbReference type="InterPro" id="IPR008181">
    <property type="entry name" value="dUTPase"/>
</dbReference>
<dbReference type="InterPro" id="IPR029054">
    <property type="entry name" value="dUTPase-like"/>
</dbReference>
<dbReference type="InterPro" id="IPR036157">
    <property type="entry name" value="dUTPase-like_sf"/>
</dbReference>
<dbReference type="InterPro" id="IPR033704">
    <property type="entry name" value="dUTPase_trimeric"/>
</dbReference>
<dbReference type="NCBIfam" id="TIGR00576">
    <property type="entry name" value="dut"/>
    <property type="match status" value="1"/>
</dbReference>
<dbReference type="NCBIfam" id="NF001862">
    <property type="entry name" value="PRK00601.1"/>
    <property type="match status" value="1"/>
</dbReference>
<dbReference type="PANTHER" id="PTHR11241">
    <property type="entry name" value="DEOXYURIDINE 5'-TRIPHOSPHATE NUCLEOTIDOHYDROLASE"/>
    <property type="match status" value="1"/>
</dbReference>
<dbReference type="PANTHER" id="PTHR11241:SF0">
    <property type="entry name" value="DEOXYURIDINE 5'-TRIPHOSPHATE NUCLEOTIDOHYDROLASE"/>
    <property type="match status" value="1"/>
</dbReference>
<dbReference type="Pfam" id="PF00692">
    <property type="entry name" value="dUTPase"/>
    <property type="match status" value="1"/>
</dbReference>
<dbReference type="SUPFAM" id="SSF51283">
    <property type="entry name" value="dUTPase-like"/>
    <property type="match status" value="1"/>
</dbReference>
<reference key="1">
    <citation type="journal article" date="2008" name="DNA Res.">
        <title>Complete genome sequence of Finegoldia magna, an anaerobic opportunistic pathogen.</title>
        <authorList>
            <person name="Goto T."/>
            <person name="Yamashita A."/>
            <person name="Hirakawa H."/>
            <person name="Matsutani M."/>
            <person name="Todo K."/>
            <person name="Ohshima K."/>
            <person name="Toh H."/>
            <person name="Miyamoto K."/>
            <person name="Kuhara S."/>
            <person name="Hattori M."/>
            <person name="Shimizu T."/>
            <person name="Akimoto S."/>
        </authorList>
    </citation>
    <scope>NUCLEOTIDE SEQUENCE [LARGE SCALE GENOMIC DNA]</scope>
    <source>
        <strain>ATCC 29328 / DSM 20472 / WAL 2508</strain>
    </source>
</reference>
<keyword id="KW-0378">Hydrolase</keyword>
<keyword id="KW-0460">Magnesium</keyword>
<keyword id="KW-0479">Metal-binding</keyword>
<keyword id="KW-0546">Nucleotide metabolism</keyword>
<keyword id="KW-1185">Reference proteome</keyword>
<accession>B0S1D8</accession>
<gene>
    <name evidence="1" type="primary">dut</name>
    <name type="ordered locus">FMG_0760</name>
</gene>
<sequence length="143" mass="16028">MKVKIINKSNNPLPKYSTIGSSGMDLRAYTENDITLKPLERTLIPTGIYISIPEGYEIQIRPRSGLSIKHGITLINCVGTIDSDYRGEIKIPVVNLSNEEYTISTGDRICQMILQKYENIEFAEVEVLDETDRNDGGFGHTGY</sequence>
<comment type="function">
    <text evidence="1">This enzyme is involved in nucleotide metabolism: it produces dUMP, the immediate precursor of thymidine nucleotides and it decreases the intracellular concentration of dUTP so that uracil cannot be incorporated into DNA.</text>
</comment>
<comment type="catalytic activity">
    <reaction evidence="1">
        <text>dUTP + H2O = dUMP + diphosphate + H(+)</text>
        <dbReference type="Rhea" id="RHEA:10248"/>
        <dbReference type="ChEBI" id="CHEBI:15377"/>
        <dbReference type="ChEBI" id="CHEBI:15378"/>
        <dbReference type="ChEBI" id="CHEBI:33019"/>
        <dbReference type="ChEBI" id="CHEBI:61555"/>
        <dbReference type="ChEBI" id="CHEBI:246422"/>
        <dbReference type="EC" id="3.6.1.23"/>
    </reaction>
</comment>
<comment type="cofactor">
    <cofactor evidence="1">
        <name>Mg(2+)</name>
        <dbReference type="ChEBI" id="CHEBI:18420"/>
    </cofactor>
</comment>
<comment type="pathway">
    <text evidence="1">Pyrimidine metabolism; dUMP biosynthesis; dUMP from dCTP (dUTP route): step 2/2.</text>
</comment>
<comment type="similarity">
    <text evidence="1">Belongs to the dUTPase family.</text>
</comment>
<feature type="chain" id="PRO_1000202983" description="Deoxyuridine 5'-triphosphate nucleotidohydrolase">
    <location>
        <begin position="1"/>
        <end position="143"/>
    </location>
</feature>
<feature type="binding site" evidence="1">
    <location>
        <begin position="63"/>
        <end position="65"/>
    </location>
    <ligand>
        <name>substrate</name>
    </ligand>
</feature>
<feature type="binding site" evidence="1">
    <location>
        <position position="76"/>
    </location>
    <ligand>
        <name>substrate</name>
    </ligand>
</feature>
<feature type="binding site" evidence="1">
    <location>
        <begin position="80"/>
        <end position="82"/>
    </location>
    <ligand>
        <name>substrate</name>
    </ligand>
</feature>
<feature type="binding site" evidence="1">
    <location>
        <position position="90"/>
    </location>
    <ligand>
        <name>substrate</name>
    </ligand>
</feature>
<name>DUT_FINM2</name>
<evidence type="ECO:0000255" key="1">
    <source>
        <dbReference type="HAMAP-Rule" id="MF_00116"/>
    </source>
</evidence>